<comment type="function">
    <text evidence="3 4">Tubulin is the major constituent of microtubules, a cylinder consisting of laterally associated linear protofilaments composed of alpha- and beta-tubulin heterodimers. Microtubules grow by the addition of GTP-tubulin dimers to the microtubule end, where a stabilizing cap forms. Below the cap, tubulin dimers are in GDP-bound state, owing to GTPase activity of alpha-tubulin.</text>
</comment>
<comment type="catalytic activity">
    <reaction evidence="1">
        <text>GTP + H2O = GDP + phosphate + H(+)</text>
        <dbReference type="Rhea" id="RHEA:19669"/>
        <dbReference type="ChEBI" id="CHEBI:15377"/>
        <dbReference type="ChEBI" id="CHEBI:15378"/>
        <dbReference type="ChEBI" id="CHEBI:37565"/>
        <dbReference type="ChEBI" id="CHEBI:43474"/>
        <dbReference type="ChEBI" id="CHEBI:58189"/>
    </reaction>
    <physiologicalReaction direction="left-to-right" evidence="1">
        <dbReference type="Rhea" id="RHEA:19670"/>
    </physiologicalReaction>
</comment>
<comment type="cofactor">
    <cofactor evidence="1">
        <name>Mg(2+)</name>
        <dbReference type="ChEBI" id="CHEBI:18420"/>
    </cofactor>
</comment>
<comment type="subunit">
    <text evidence="3 4">Dimer of alpha and beta chains. A typical microtubule is a hollow water-filled tube with an outer diameter of 25 nm and an inner diameter of 15 nM. Alpha-beta heterodimers associate head-to-tail to form protofilaments running lengthwise along the microtubule wall with the beta-tubulin subunit facing the microtubule plus end conferring a structural polarity. Microtubules usually have 13 protofilaments but different protofilament numbers can be found in some organisms and specialized cells.</text>
</comment>
<comment type="subcellular location">
    <subcellularLocation>
        <location evidence="7">Cytoplasm</location>
        <location evidence="7">Cytoskeleton</location>
    </subcellularLocation>
</comment>
<comment type="PTM">
    <text evidence="2">Acetylation of alpha chains at Lys-40 stabilizes microtubules and affects affinity and processivity of microtubule motors. This modification has a role in multiple cellular functions, ranging from cell motility, cell cycle progression or cell differentiation to intracellular trafficking and signaling.</text>
</comment>
<comment type="allergen">
    <text evidence="5">Causes an allergic reaction in human. Binds to IgE in 29% of 41 patients allergic to storage mite T.putrescentiae.</text>
</comment>
<comment type="similarity">
    <text evidence="3 4 7">Belongs to the tubulin family.</text>
</comment>
<comment type="caution">
    <text evidence="7">This protein lacks the Tyr in position 450 required for a tyrosination/detyrosination cycle, the cyclic removal and re-addition of a C-terminal tyrosine residue; it is replaced by a Phe.</text>
</comment>
<proteinExistence type="evidence at protein level"/>
<organism evidence="8">
    <name type="scientific">Tyrophagus putrescentiae</name>
    <name type="common">Mold mite</name>
    <name type="synonym">Acarus putrescentiae</name>
    <dbReference type="NCBI Taxonomy" id="59818"/>
    <lineage>
        <taxon>Eukaryota</taxon>
        <taxon>Metazoa</taxon>
        <taxon>Ecdysozoa</taxon>
        <taxon>Arthropoda</taxon>
        <taxon>Chelicerata</taxon>
        <taxon>Arachnida</taxon>
        <taxon>Acari</taxon>
        <taxon>Acariformes</taxon>
        <taxon>Sarcoptiformes</taxon>
        <taxon>Astigmata</taxon>
        <taxon>Acaroidea</taxon>
        <taxon>Acaridae</taxon>
        <taxon>Tyrophaginae</taxon>
        <taxon>Tyrophagus</taxon>
    </lineage>
</organism>
<feature type="chain" id="PRO_0000447303" description="Tubulin alpha chain">
    <location>
        <begin position="1"/>
        <end position="450"/>
    </location>
</feature>
<feature type="active site" evidence="1">
    <location>
        <position position="254"/>
    </location>
</feature>
<feature type="binding site" evidence="1">
    <location>
        <position position="11"/>
    </location>
    <ligand>
        <name>GTP</name>
        <dbReference type="ChEBI" id="CHEBI:37565"/>
    </ligand>
</feature>
<feature type="binding site" evidence="1">
    <location>
        <position position="71"/>
    </location>
    <ligand>
        <name>GTP</name>
        <dbReference type="ChEBI" id="CHEBI:37565"/>
    </ligand>
</feature>
<feature type="binding site" evidence="1">
    <location>
        <position position="71"/>
    </location>
    <ligand>
        <name>Mg(2+)</name>
        <dbReference type="ChEBI" id="CHEBI:18420"/>
    </ligand>
</feature>
<feature type="binding site" evidence="1">
    <location>
        <position position="140"/>
    </location>
    <ligand>
        <name>GTP</name>
        <dbReference type="ChEBI" id="CHEBI:37565"/>
    </ligand>
</feature>
<feature type="binding site" evidence="1">
    <location>
        <position position="144"/>
    </location>
    <ligand>
        <name>GTP</name>
        <dbReference type="ChEBI" id="CHEBI:37565"/>
    </ligand>
</feature>
<feature type="binding site" evidence="1">
    <location>
        <position position="145"/>
    </location>
    <ligand>
        <name>GTP</name>
        <dbReference type="ChEBI" id="CHEBI:37565"/>
    </ligand>
</feature>
<feature type="binding site" evidence="1">
    <location>
        <position position="179"/>
    </location>
    <ligand>
        <name>GTP</name>
        <dbReference type="ChEBI" id="CHEBI:37565"/>
    </ligand>
</feature>
<feature type="binding site" evidence="1">
    <location>
        <position position="206"/>
    </location>
    <ligand>
        <name>GTP</name>
        <dbReference type="ChEBI" id="CHEBI:37565"/>
    </ligand>
</feature>
<feature type="binding site" evidence="1">
    <location>
        <position position="228"/>
    </location>
    <ligand>
        <name>GTP</name>
        <dbReference type="ChEBI" id="CHEBI:37565"/>
    </ligand>
</feature>
<feature type="modified residue" description="N6-acetyllysine" evidence="2">
    <location>
        <position position="40"/>
    </location>
</feature>
<dbReference type="EC" id="3.6.5.-" evidence="1"/>
<dbReference type="EMBL" id="AY986760">
    <property type="protein sequence ID" value="AAX84656.1"/>
    <property type="molecule type" value="mRNA"/>
</dbReference>
<dbReference type="SMR" id="Q52PV9"/>
<dbReference type="Allergome" id="2822">
    <property type="allergen name" value="Tyr p 33"/>
</dbReference>
<dbReference type="GO" id="GO:0005737">
    <property type="term" value="C:cytoplasm"/>
    <property type="evidence" value="ECO:0007669"/>
    <property type="project" value="UniProtKB-KW"/>
</dbReference>
<dbReference type="GO" id="GO:0005874">
    <property type="term" value="C:microtubule"/>
    <property type="evidence" value="ECO:0000250"/>
    <property type="project" value="UniProtKB"/>
</dbReference>
<dbReference type="GO" id="GO:0005525">
    <property type="term" value="F:GTP binding"/>
    <property type="evidence" value="ECO:0007669"/>
    <property type="project" value="UniProtKB-KW"/>
</dbReference>
<dbReference type="GO" id="GO:0016787">
    <property type="term" value="F:hydrolase activity"/>
    <property type="evidence" value="ECO:0007669"/>
    <property type="project" value="UniProtKB-KW"/>
</dbReference>
<dbReference type="GO" id="GO:0046872">
    <property type="term" value="F:metal ion binding"/>
    <property type="evidence" value="ECO:0007669"/>
    <property type="project" value="UniProtKB-KW"/>
</dbReference>
<dbReference type="GO" id="GO:0005200">
    <property type="term" value="F:structural constituent of cytoskeleton"/>
    <property type="evidence" value="ECO:0007669"/>
    <property type="project" value="InterPro"/>
</dbReference>
<dbReference type="GO" id="GO:0007017">
    <property type="term" value="P:microtubule-based process"/>
    <property type="evidence" value="ECO:0000250"/>
    <property type="project" value="UniProtKB"/>
</dbReference>
<dbReference type="CDD" id="cd02186">
    <property type="entry name" value="alpha_tubulin"/>
    <property type="match status" value="1"/>
</dbReference>
<dbReference type="FunFam" id="1.10.287.600:FF:000005">
    <property type="entry name" value="Tubulin alpha chain"/>
    <property type="match status" value="1"/>
</dbReference>
<dbReference type="FunFam" id="3.30.1330.20:FF:000001">
    <property type="entry name" value="Tubulin alpha chain"/>
    <property type="match status" value="1"/>
</dbReference>
<dbReference type="FunFam" id="3.40.50.1440:FF:000002">
    <property type="entry name" value="Tubulin alpha chain"/>
    <property type="match status" value="1"/>
</dbReference>
<dbReference type="Gene3D" id="1.10.287.600">
    <property type="entry name" value="Helix hairpin bin"/>
    <property type="match status" value="1"/>
</dbReference>
<dbReference type="Gene3D" id="3.30.1330.20">
    <property type="entry name" value="Tubulin/FtsZ, C-terminal domain"/>
    <property type="match status" value="1"/>
</dbReference>
<dbReference type="Gene3D" id="3.40.50.1440">
    <property type="entry name" value="Tubulin/FtsZ, GTPase domain"/>
    <property type="match status" value="1"/>
</dbReference>
<dbReference type="InterPro" id="IPR002452">
    <property type="entry name" value="Alpha_tubulin"/>
</dbReference>
<dbReference type="InterPro" id="IPR008280">
    <property type="entry name" value="Tub_FtsZ_C"/>
</dbReference>
<dbReference type="InterPro" id="IPR000217">
    <property type="entry name" value="Tubulin"/>
</dbReference>
<dbReference type="InterPro" id="IPR037103">
    <property type="entry name" value="Tubulin/FtsZ-like_C"/>
</dbReference>
<dbReference type="InterPro" id="IPR018316">
    <property type="entry name" value="Tubulin/FtsZ_2-layer-sand-dom"/>
</dbReference>
<dbReference type="InterPro" id="IPR036525">
    <property type="entry name" value="Tubulin/FtsZ_GTPase_sf"/>
</dbReference>
<dbReference type="InterPro" id="IPR023123">
    <property type="entry name" value="Tubulin_C"/>
</dbReference>
<dbReference type="InterPro" id="IPR017975">
    <property type="entry name" value="Tubulin_CS"/>
</dbReference>
<dbReference type="InterPro" id="IPR003008">
    <property type="entry name" value="Tubulin_FtsZ_GTPase"/>
</dbReference>
<dbReference type="PANTHER" id="PTHR11588">
    <property type="entry name" value="TUBULIN"/>
    <property type="match status" value="1"/>
</dbReference>
<dbReference type="Pfam" id="PF00091">
    <property type="entry name" value="Tubulin"/>
    <property type="match status" value="1"/>
</dbReference>
<dbReference type="Pfam" id="PF03953">
    <property type="entry name" value="Tubulin_C"/>
    <property type="match status" value="1"/>
</dbReference>
<dbReference type="PRINTS" id="PR01162">
    <property type="entry name" value="ALPHATUBULIN"/>
</dbReference>
<dbReference type="PRINTS" id="PR01161">
    <property type="entry name" value="TUBULIN"/>
</dbReference>
<dbReference type="SMART" id="SM00864">
    <property type="entry name" value="Tubulin"/>
    <property type="match status" value="1"/>
</dbReference>
<dbReference type="SMART" id="SM00865">
    <property type="entry name" value="Tubulin_C"/>
    <property type="match status" value="1"/>
</dbReference>
<dbReference type="SUPFAM" id="SSF55307">
    <property type="entry name" value="Tubulin C-terminal domain-like"/>
    <property type="match status" value="1"/>
</dbReference>
<dbReference type="SUPFAM" id="SSF52490">
    <property type="entry name" value="Tubulin nucleotide-binding domain-like"/>
    <property type="match status" value="1"/>
</dbReference>
<dbReference type="PROSITE" id="PS00227">
    <property type="entry name" value="TUBULIN"/>
    <property type="match status" value="1"/>
</dbReference>
<evidence type="ECO:0000250" key="1">
    <source>
        <dbReference type="UniProtKB" id="P68363"/>
    </source>
</evidence>
<evidence type="ECO:0000250" key="2">
    <source>
        <dbReference type="UniProtKB" id="P91910"/>
    </source>
</evidence>
<evidence type="ECO:0000255" key="3"/>
<evidence type="ECO:0000255" key="4">
    <source>
        <dbReference type="RuleBase" id="RU000352"/>
    </source>
</evidence>
<evidence type="ECO:0000269" key="5">
    <source>
    </source>
</evidence>
<evidence type="ECO:0000303" key="6">
    <source>
    </source>
</evidence>
<evidence type="ECO:0000305" key="7"/>
<evidence type="ECO:0000312" key="8">
    <source>
        <dbReference type="EMBL" id="AAX84656.1"/>
    </source>
</evidence>
<keyword id="KW-0007">Acetylation</keyword>
<keyword id="KW-0020">Allergen</keyword>
<keyword id="KW-0963">Cytoplasm</keyword>
<keyword id="KW-0206">Cytoskeleton</keyword>
<keyword id="KW-0342">GTP-binding</keyword>
<keyword id="KW-0378">Hydrolase</keyword>
<keyword id="KW-0460">Magnesium</keyword>
<keyword id="KW-0479">Metal-binding</keyword>
<keyword id="KW-0493">Microtubule</keyword>
<keyword id="KW-0547">Nucleotide-binding</keyword>
<accession>Q52PV9</accession>
<protein>
    <recommendedName>
        <fullName evidence="4 7">Tubulin alpha chain</fullName>
        <ecNumber evidence="1">3.6.5.-</ecNumber>
    </recommendedName>
    <alternativeName>
        <fullName evidence="6">Alpha-tubulin</fullName>
    </alternativeName>
    <allergenName evidence="7">Tyr p 33</allergenName>
</protein>
<name>TBA_TYRPU</name>
<sequence>MRECISVHVGQAGVQIGNACWELYCLEHGIQPDGQMPSDKTIGTGDDSFNTFFSETGSGKHVPRAVYVDLEPTVVDEVRTGTYRQLFHPEQLITGKEDAANNYARGHYTIGKEIVDVVLDRIRKLSDQCTGLQGFLIFHSFGGGTGSGFTSLLMERLSVDYGKKSKLEFAVYPAPQVSTAVVEPYNSILTTHTTLEHSDCAFMVDNEAIYDICRRNLDIERPTYTNLNRLIGQIVSSITASLRFDGALNVELTEFQTNLVPYPRIHFPLVTYSPVISAEKAYHEQLTVAEITNTCFEPQNQMVKCDPRHGKYMACCLLYRGDVVPKDVNAAIAGIKTKRSIQFVDWCPTGFKVGINYQPPTVVPGGDLAKVQRAVCMLSNTTAIAEAWARLDHKFDLMYAKRAFVHWYVGEGMEEGEFSEAREDLAALEKDYEEVGLDSTEAEGGDGEEF</sequence>
<reference evidence="8" key="1">
    <citation type="journal article" date="2005" name="Clin. Diagn. Lab. Immunol.">
        <title>Immunoglobulin E binding reactivity of a recombinant allergen homologous to alpha-Tubulin from Tyrophagus putrescentiae.</title>
        <authorList>
            <person name="Jeong K.Y."/>
            <person name="Lee H."/>
            <person name="Lee J.S."/>
            <person name="Lee J."/>
            <person name="Lee I.Y."/>
            <person name="Ree H.I."/>
            <person name="Hong C.S."/>
            <person name="Park J.W."/>
            <person name="Yong T.S."/>
        </authorList>
    </citation>
    <scope>NUCLEOTIDE SEQUENCE [MRNA]</scope>
    <scope>ALLERGEN</scope>
</reference>